<keyword id="KW-0028">Amino-acid biosynthesis</keyword>
<keyword id="KW-0055">Arginine biosynthesis</keyword>
<keyword id="KW-0963">Cytoplasm</keyword>
<keyword id="KW-0521">NADP</keyword>
<keyword id="KW-0560">Oxidoreductase</keyword>
<accession>B9KSY0</accession>
<evidence type="ECO:0000255" key="1">
    <source>
        <dbReference type="HAMAP-Rule" id="MF_00150"/>
    </source>
</evidence>
<proteinExistence type="inferred from homology"/>
<protein>
    <recommendedName>
        <fullName evidence="1">N-acetyl-gamma-glutamyl-phosphate reductase</fullName>
        <shortName evidence="1">AGPR</shortName>
        <ecNumber evidence="1">1.2.1.38</ecNumber>
    </recommendedName>
    <alternativeName>
        <fullName evidence="1">N-acetyl-glutamate semialdehyde dehydrogenase</fullName>
        <shortName evidence="1">NAGSA dehydrogenase</shortName>
    </alternativeName>
</protein>
<reference key="1">
    <citation type="journal article" date="2009" name="J. Bacteriol.">
        <title>Complete genome sequence of Rhodobacter sphaeroides KD131.</title>
        <authorList>
            <person name="Lim S.-K."/>
            <person name="Kim S.J."/>
            <person name="Cha S.H."/>
            <person name="Oh Y.-K."/>
            <person name="Rhee H.-J."/>
            <person name="Kim M.-S."/>
            <person name="Lee J.K."/>
        </authorList>
    </citation>
    <scope>NUCLEOTIDE SEQUENCE [LARGE SCALE GENOMIC DNA]</scope>
    <source>
        <strain>KD131 / KCTC 12085</strain>
    </source>
</reference>
<sequence length="342" mass="37029">MVQNIAILGASGYTGAELVRLIATHPSMRIVALSGDRKAGMAMAEVFPFLRHLDLPRLQKIEEIDFSSVDLAFCALPHATSQAVIAGLPRDLKIVDLSADFRLRDPAAYETWYGKPHAAPELQKEAVYGLTEFYRDEIRAARLVAGTGCNAATGQYAIRPLIEAGVIDLDDILIDLKAGVSGAGRSLKENLLHAELSEGTHAYSAGGRHRHLGEFDQEFSKIAGRPVQVRFTPHLTPMNRGILANVYVKGDPQAVHRALTERYLTETFLEVLPFGALPSTRDIRGSNYVHIGVIGDRVPGCAMVVAVLDNLCKGSSGQAIQNANLMLGLDEAEGLRLAPVFP</sequence>
<name>ARGC_CERSK</name>
<gene>
    <name evidence="1" type="primary">argC</name>
    <name type="ordered locus">RSKD131_1266</name>
</gene>
<organism>
    <name type="scientific">Cereibacter sphaeroides (strain KD131 / KCTC 12085)</name>
    <name type="common">Rhodobacter sphaeroides</name>
    <dbReference type="NCBI Taxonomy" id="557760"/>
    <lineage>
        <taxon>Bacteria</taxon>
        <taxon>Pseudomonadati</taxon>
        <taxon>Pseudomonadota</taxon>
        <taxon>Alphaproteobacteria</taxon>
        <taxon>Rhodobacterales</taxon>
        <taxon>Paracoccaceae</taxon>
        <taxon>Cereibacter</taxon>
    </lineage>
</organism>
<feature type="chain" id="PRO_1000123250" description="N-acetyl-gamma-glutamyl-phosphate reductase">
    <location>
        <begin position="1"/>
        <end position="342"/>
    </location>
</feature>
<feature type="active site" evidence="1">
    <location>
        <position position="149"/>
    </location>
</feature>
<comment type="function">
    <text evidence="1">Catalyzes the NADPH-dependent reduction of N-acetyl-5-glutamyl phosphate to yield N-acetyl-L-glutamate 5-semialdehyde.</text>
</comment>
<comment type="catalytic activity">
    <reaction evidence="1">
        <text>N-acetyl-L-glutamate 5-semialdehyde + phosphate + NADP(+) = N-acetyl-L-glutamyl 5-phosphate + NADPH + H(+)</text>
        <dbReference type="Rhea" id="RHEA:21588"/>
        <dbReference type="ChEBI" id="CHEBI:15378"/>
        <dbReference type="ChEBI" id="CHEBI:29123"/>
        <dbReference type="ChEBI" id="CHEBI:43474"/>
        <dbReference type="ChEBI" id="CHEBI:57783"/>
        <dbReference type="ChEBI" id="CHEBI:57936"/>
        <dbReference type="ChEBI" id="CHEBI:58349"/>
        <dbReference type="EC" id="1.2.1.38"/>
    </reaction>
</comment>
<comment type="pathway">
    <text evidence="1">Amino-acid biosynthesis; L-arginine biosynthesis; N(2)-acetyl-L-ornithine from L-glutamate: step 3/4.</text>
</comment>
<comment type="subcellular location">
    <subcellularLocation>
        <location evidence="1">Cytoplasm</location>
    </subcellularLocation>
</comment>
<comment type="similarity">
    <text evidence="1">Belongs to the NAGSA dehydrogenase family. Type 1 subfamily.</text>
</comment>
<dbReference type="EC" id="1.2.1.38" evidence="1"/>
<dbReference type="EMBL" id="CP001150">
    <property type="protein sequence ID" value="ACM01126.1"/>
    <property type="molecule type" value="Genomic_DNA"/>
</dbReference>
<dbReference type="RefSeq" id="WP_015920629.1">
    <property type="nucleotide sequence ID" value="NC_011963.1"/>
</dbReference>
<dbReference type="SMR" id="B9KSY0"/>
<dbReference type="GeneID" id="67446688"/>
<dbReference type="KEGG" id="rsk:RSKD131_1266"/>
<dbReference type="HOGENOM" id="CLU_006384_0_1_5"/>
<dbReference type="UniPathway" id="UPA00068">
    <property type="reaction ID" value="UER00108"/>
</dbReference>
<dbReference type="GO" id="GO:0005737">
    <property type="term" value="C:cytoplasm"/>
    <property type="evidence" value="ECO:0007669"/>
    <property type="project" value="UniProtKB-SubCell"/>
</dbReference>
<dbReference type="GO" id="GO:0003942">
    <property type="term" value="F:N-acetyl-gamma-glutamyl-phosphate reductase activity"/>
    <property type="evidence" value="ECO:0007669"/>
    <property type="project" value="UniProtKB-UniRule"/>
</dbReference>
<dbReference type="GO" id="GO:0051287">
    <property type="term" value="F:NAD binding"/>
    <property type="evidence" value="ECO:0007669"/>
    <property type="project" value="InterPro"/>
</dbReference>
<dbReference type="GO" id="GO:0070401">
    <property type="term" value="F:NADP+ binding"/>
    <property type="evidence" value="ECO:0007669"/>
    <property type="project" value="InterPro"/>
</dbReference>
<dbReference type="GO" id="GO:0006526">
    <property type="term" value="P:L-arginine biosynthetic process"/>
    <property type="evidence" value="ECO:0007669"/>
    <property type="project" value="UniProtKB-UniRule"/>
</dbReference>
<dbReference type="CDD" id="cd23934">
    <property type="entry name" value="AGPR_1_C"/>
    <property type="match status" value="1"/>
</dbReference>
<dbReference type="CDD" id="cd17895">
    <property type="entry name" value="AGPR_1_N"/>
    <property type="match status" value="1"/>
</dbReference>
<dbReference type="Gene3D" id="3.30.360.10">
    <property type="entry name" value="Dihydrodipicolinate Reductase, domain 2"/>
    <property type="match status" value="1"/>
</dbReference>
<dbReference type="Gene3D" id="3.40.50.720">
    <property type="entry name" value="NAD(P)-binding Rossmann-like Domain"/>
    <property type="match status" value="1"/>
</dbReference>
<dbReference type="HAMAP" id="MF_00150">
    <property type="entry name" value="ArgC_type1"/>
    <property type="match status" value="1"/>
</dbReference>
<dbReference type="InterPro" id="IPR000706">
    <property type="entry name" value="AGPR_type-1"/>
</dbReference>
<dbReference type="InterPro" id="IPR036291">
    <property type="entry name" value="NAD(P)-bd_dom_sf"/>
</dbReference>
<dbReference type="InterPro" id="IPR050085">
    <property type="entry name" value="NAGSA_dehydrogenase"/>
</dbReference>
<dbReference type="InterPro" id="IPR000534">
    <property type="entry name" value="Semialdehyde_DH_NAD-bd"/>
</dbReference>
<dbReference type="NCBIfam" id="TIGR01850">
    <property type="entry name" value="argC"/>
    <property type="match status" value="1"/>
</dbReference>
<dbReference type="PANTHER" id="PTHR32338:SF10">
    <property type="entry name" value="N-ACETYL-GAMMA-GLUTAMYL-PHOSPHATE REDUCTASE, CHLOROPLASTIC-RELATED"/>
    <property type="match status" value="1"/>
</dbReference>
<dbReference type="PANTHER" id="PTHR32338">
    <property type="entry name" value="N-ACETYL-GAMMA-GLUTAMYL-PHOSPHATE REDUCTASE, CHLOROPLASTIC-RELATED-RELATED"/>
    <property type="match status" value="1"/>
</dbReference>
<dbReference type="Pfam" id="PF01118">
    <property type="entry name" value="Semialdhyde_dh"/>
    <property type="match status" value="1"/>
</dbReference>
<dbReference type="Pfam" id="PF22698">
    <property type="entry name" value="Semialdhyde_dhC_1"/>
    <property type="match status" value="1"/>
</dbReference>
<dbReference type="SMART" id="SM00859">
    <property type="entry name" value="Semialdhyde_dh"/>
    <property type="match status" value="1"/>
</dbReference>
<dbReference type="SUPFAM" id="SSF55347">
    <property type="entry name" value="Glyceraldehyde-3-phosphate dehydrogenase-like, C-terminal domain"/>
    <property type="match status" value="1"/>
</dbReference>
<dbReference type="SUPFAM" id="SSF51735">
    <property type="entry name" value="NAD(P)-binding Rossmann-fold domains"/>
    <property type="match status" value="1"/>
</dbReference>